<reference key="1">
    <citation type="journal article" date="1997" name="Plant Physiol.">
        <title>The Arabidopsis 14-3-3 multigene family.</title>
        <authorList>
            <person name="Wu K."/>
            <person name="Rooney M.F."/>
            <person name="Ferl R.J."/>
        </authorList>
    </citation>
    <scope>NUCLEOTIDE SEQUENCE [MRNA]</scope>
    <source>
        <strain>cv. Columbia</strain>
    </source>
</reference>
<reference key="2">
    <citation type="online journal article" date="1999" name="Plant Gene Register">
        <title>Sequences of five Arabidopsis general regulatory factor (GRF) genes encoding 14-3-3 proteins.</title>
        <authorList>
            <person name="Chung H.-J."/>
            <person name="Shanker S."/>
            <person name="Ferl R.J."/>
        </authorList>
        <locator>PGR99-114</locator>
    </citation>
    <scope>NUCLEOTIDE SEQUENCE [GENOMIC DNA]</scope>
    <source>
        <strain>cv. Columbia</strain>
    </source>
</reference>
<reference key="3">
    <citation type="journal article" date="2000" name="Nature">
        <title>Sequence and analysis of chromosome 3 of the plant Arabidopsis thaliana.</title>
        <authorList>
            <person name="Salanoubat M."/>
            <person name="Lemcke K."/>
            <person name="Rieger M."/>
            <person name="Ansorge W."/>
            <person name="Unseld M."/>
            <person name="Fartmann B."/>
            <person name="Valle G."/>
            <person name="Bloecker H."/>
            <person name="Perez-Alonso M."/>
            <person name="Obermaier B."/>
            <person name="Delseny M."/>
            <person name="Boutry M."/>
            <person name="Grivell L.A."/>
            <person name="Mache R."/>
            <person name="Puigdomenech P."/>
            <person name="De Simone V."/>
            <person name="Choisne N."/>
            <person name="Artiguenave F."/>
            <person name="Robert C."/>
            <person name="Brottier P."/>
            <person name="Wincker P."/>
            <person name="Cattolico L."/>
            <person name="Weissenbach J."/>
            <person name="Saurin W."/>
            <person name="Quetier F."/>
            <person name="Schaefer M."/>
            <person name="Mueller-Auer S."/>
            <person name="Gabel C."/>
            <person name="Fuchs M."/>
            <person name="Benes V."/>
            <person name="Wurmbach E."/>
            <person name="Drzonek H."/>
            <person name="Erfle H."/>
            <person name="Jordan N."/>
            <person name="Bangert S."/>
            <person name="Wiedelmann R."/>
            <person name="Kranz H."/>
            <person name="Voss H."/>
            <person name="Holland R."/>
            <person name="Brandt P."/>
            <person name="Nyakatura G."/>
            <person name="Vezzi A."/>
            <person name="D'Angelo M."/>
            <person name="Pallavicini A."/>
            <person name="Toppo S."/>
            <person name="Simionati B."/>
            <person name="Conrad A."/>
            <person name="Hornischer K."/>
            <person name="Kauer G."/>
            <person name="Loehnert T.-H."/>
            <person name="Nordsiek G."/>
            <person name="Reichelt J."/>
            <person name="Scharfe M."/>
            <person name="Schoen O."/>
            <person name="Bargues M."/>
            <person name="Terol J."/>
            <person name="Climent J."/>
            <person name="Navarro P."/>
            <person name="Collado C."/>
            <person name="Perez-Perez A."/>
            <person name="Ottenwaelder B."/>
            <person name="Duchemin D."/>
            <person name="Cooke R."/>
            <person name="Laudie M."/>
            <person name="Berger-Llauro C."/>
            <person name="Purnelle B."/>
            <person name="Masuy D."/>
            <person name="de Haan M."/>
            <person name="Maarse A.C."/>
            <person name="Alcaraz J.-P."/>
            <person name="Cottet A."/>
            <person name="Casacuberta E."/>
            <person name="Monfort A."/>
            <person name="Argiriou A."/>
            <person name="Flores M."/>
            <person name="Liguori R."/>
            <person name="Vitale D."/>
            <person name="Mannhaupt G."/>
            <person name="Haase D."/>
            <person name="Schoof H."/>
            <person name="Rudd S."/>
            <person name="Zaccaria P."/>
            <person name="Mewes H.-W."/>
            <person name="Mayer K.F.X."/>
            <person name="Kaul S."/>
            <person name="Town C.D."/>
            <person name="Koo H.L."/>
            <person name="Tallon L.J."/>
            <person name="Jenkins J."/>
            <person name="Rooney T."/>
            <person name="Rizzo M."/>
            <person name="Walts A."/>
            <person name="Utterback T."/>
            <person name="Fujii C.Y."/>
            <person name="Shea T.P."/>
            <person name="Creasy T.H."/>
            <person name="Haas B."/>
            <person name="Maiti R."/>
            <person name="Wu D."/>
            <person name="Peterson J."/>
            <person name="Van Aken S."/>
            <person name="Pai G."/>
            <person name="Militscher J."/>
            <person name="Sellers P."/>
            <person name="Gill J.E."/>
            <person name="Feldblyum T.V."/>
            <person name="Preuss D."/>
            <person name="Lin X."/>
            <person name="Nierman W.C."/>
            <person name="Salzberg S.L."/>
            <person name="White O."/>
            <person name="Venter J.C."/>
            <person name="Fraser C.M."/>
            <person name="Kaneko T."/>
            <person name="Nakamura Y."/>
            <person name="Sato S."/>
            <person name="Kato T."/>
            <person name="Asamizu E."/>
            <person name="Sasamoto S."/>
            <person name="Kimura T."/>
            <person name="Idesawa K."/>
            <person name="Kawashima K."/>
            <person name="Kishida Y."/>
            <person name="Kiyokawa C."/>
            <person name="Kohara M."/>
            <person name="Matsumoto M."/>
            <person name="Matsuno A."/>
            <person name="Muraki A."/>
            <person name="Nakayama S."/>
            <person name="Nakazaki N."/>
            <person name="Shinpo S."/>
            <person name="Takeuchi C."/>
            <person name="Wada T."/>
            <person name="Watanabe A."/>
            <person name="Yamada M."/>
            <person name="Yasuda M."/>
            <person name="Tabata S."/>
        </authorList>
    </citation>
    <scope>NUCLEOTIDE SEQUENCE [LARGE SCALE GENOMIC DNA]</scope>
    <source>
        <strain>cv. Columbia</strain>
    </source>
</reference>
<reference key="4">
    <citation type="journal article" date="2017" name="Plant J.">
        <title>Araport11: a complete reannotation of the Arabidopsis thaliana reference genome.</title>
        <authorList>
            <person name="Cheng C.Y."/>
            <person name="Krishnakumar V."/>
            <person name="Chan A.P."/>
            <person name="Thibaud-Nissen F."/>
            <person name="Schobel S."/>
            <person name="Town C.D."/>
        </authorList>
    </citation>
    <scope>GENOME REANNOTATION</scope>
    <source>
        <strain>cv. Columbia</strain>
    </source>
</reference>
<reference key="5">
    <citation type="journal article" date="2003" name="Science">
        <title>Empirical analysis of transcriptional activity in the Arabidopsis genome.</title>
        <authorList>
            <person name="Yamada K."/>
            <person name="Lim J."/>
            <person name="Dale J.M."/>
            <person name="Chen H."/>
            <person name="Shinn P."/>
            <person name="Palm C.J."/>
            <person name="Southwick A.M."/>
            <person name="Wu H.C."/>
            <person name="Kim C.J."/>
            <person name="Nguyen M."/>
            <person name="Pham P.K."/>
            <person name="Cheuk R.F."/>
            <person name="Karlin-Newmann G."/>
            <person name="Liu S.X."/>
            <person name="Lam B."/>
            <person name="Sakano H."/>
            <person name="Wu T."/>
            <person name="Yu G."/>
            <person name="Miranda M."/>
            <person name="Quach H.L."/>
            <person name="Tripp M."/>
            <person name="Chang C.H."/>
            <person name="Lee J.M."/>
            <person name="Toriumi M.J."/>
            <person name="Chan M.M."/>
            <person name="Tang C.C."/>
            <person name="Onodera C.S."/>
            <person name="Deng J.M."/>
            <person name="Akiyama K."/>
            <person name="Ansari Y."/>
            <person name="Arakawa T."/>
            <person name="Banh J."/>
            <person name="Banno F."/>
            <person name="Bowser L."/>
            <person name="Brooks S.Y."/>
            <person name="Carninci P."/>
            <person name="Chao Q."/>
            <person name="Choy N."/>
            <person name="Enju A."/>
            <person name="Goldsmith A.D."/>
            <person name="Gurjal M."/>
            <person name="Hansen N.F."/>
            <person name="Hayashizaki Y."/>
            <person name="Johnson-Hopson C."/>
            <person name="Hsuan V.W."/>
            <person name="Iida K."/>
            <person name="Karnes M."/>
            <person name="Khan S."/>
            <person name="Koesema E."/>
            <person name="Ishida J."/>
            <person name="Jiang P.X."/>
            <person name="Jones T."/>
            <person name="Kawai J."/>
            <person name="Kamiya A."/>
            <person name="Meyers C."/>
            <person name="Nakajima M."/>
            <person name="Narusaka M."/>
            <person name="Seki M."/>
            <person name="Sakurai T."/>
            <person name="Satou M."/>
            <person name="Tamse R."/>
            <person name="Vaysberg M."/>
            <person name="Wallender E.K."/>
            <person name="Wong C."/>
            <person name="Yamamura Y."/>
            <person name="Yuan S."/>
            <person name="Shinozaki K."/>
            <person name="Davis R.W."/>
            <person name="Theologis A."/>
            <person name="Ecker J.R."/>
        </authorList>
    </citation>
    <scope>NUCLEOTIDE SEQUENCE [LARGE SCALE MRNA]</scope>
    <source>
        <strain>cv. Columbia</strain>
    </source>
</reference>
<reference key="6">
    <citation type="submission" date="2002-03" db="EMBL/GenBank/DDBJ databases">
        <title>Full-length cDNA from Arabidopsis thaliana.</title>
        <authorList>
            <person name="Brover V.V."/>
            <person name="Troukhan M.E."/>
            <person name="Alexandrov N.A."/>
            <person name="Lu Y.-P."/>
            <person name="Flavell R.B."/>
            <person name="Feldmann K.A."/>
        </authorList>
    </citation>
    <scope>NUCLEOTIDE SEQUENCE [LARGE SCALE MRNA]</scope>
</reference>
<reference key="7">
    <citation type="journal article" date="2006" name="Plant Cell">
        <title>The Arabidopsis SOMATIC EMBRYOGENESIS RECEPTOR-LIKE KINASE1 protein complex includes BRASSINOSTEROID-INSENSITIVE1.</title>
        <authorList>
            <person name="Karlova R."/>
            <person name="Boeren S."/>
            <person name="Russinova E."/>
            <person name="Aker J."/>
            <person name="Vervoort J."/>
            <person name="de Vries S.C."/>
        </authorList>
    </citation>
    <scope>IDENTIFICATION IN THE SERK1 COMPLEX</scope>
</reference>
<reference key="8">
    <citation type="journal article" date="2014" name="Plant J.">
        <title>Light modulated activity of root alkaline/neutral invertase involves the interaction with 14-3-3 proteins.</title>
        <authorList>
            <person name="Gao J."/>
            <person name="van Kleeff P.J."/>
            <person name="Oecking C."/>
            <person name="Li K.W."/>
            <person name="Erban A."/>
            <person name="Kopka J."/>
            <person name="Hincha D.K."/>
            <person name="de Boer A.H."/>
        </authorList>
    </citation>
    <scope>INTERACTION WITH CINV1</scope>
</reference>
<reference key="9">
    <citation type="journal article" date="2017" name="Mol. Cell">
        <title>Plasma membrane CRPK1-mediated phosphorylation of 14-3-3 proteins induces their nuclear import to fine-tune CBF signaling during cold response.</title>
        <authorList>
            <person name="Liu Z."/>
            <person name="Jia Y."/>
            <person name="Ding Y."/>
            <person name="Shi Y."/>
            <person name="Li Z."/>
            <person name="Guo Y."/>
            <person name="Gong Z."/>
            <person name="Yang S."/>
        </authorList>
    </citation>
    <scope>INTERACTION WITH DREB1A AND DREB1B</scope>
    <source>
        <strain>cv. Columbia</strain>
    </source>
</reference>
<proteinExistence type="evidence at protein level"/>
<protein>
    <recommendedName>
        <fullName>14-3-3-like protein GF14 nu</fullName>
    </recommendedName>
    <alternativeName>
        <fullName>General regulatory factor 7</fullName>
    </alternativeName>
</protein>
<sequence>MSSSREENVYLAKLAEQAERYEEMVEFMEKVAKTVDTDELTVEERNLLSVAYKNVIGARRASWRIISSIEQKEESRGNDDHVSIIKDYRGKIETELSKICDGILNLLDSHLVPTASLAESKVFYLKMKGDYHRYLAEFKTGAERKEAAESTLVAYKSAQDIALADLAPTHPIRLGLALNFSVFYYEILNSPDRACSLAKQAFDEAISELDTLGEESYKDSTLIMQLLRDNLTLWNSDINDEAGGDEIKEASKHEPEEGKPAETGQ</sequence>
<name>14337_ARATH</name>
<accession>Q96300</accession>
<keyword id="KW-0963">Cytoplasm</keyword>
<keyword id="KW-0539">Nucleus</keyword>
<keyword id="KW-0597">Phosphoprotein</keyword>
<keyword id="KW-1185">Reference proteome</keyword>
<dbReference type="EMBL" id="U60445">
    <property type="protein sequence ID" value="AAB49335.1"/>
    <property type="molecule type" value="mRNA"/>
</dbReference>
<dbReference type="EMBL" id="AF145299">
    <property type="protein sequence ID" value="AAD51782.1"/>
    <property type="molecule type" value="Genomic_DNA"/>
</dbReference>
<dbReference type="EMBL" id="AC021640">
    <property type="protein sequence ID" value="AAF32459.1"/>
    <property type="molecule type" value="Genomic_DNA"/>
</dbReference>
<dbReference type="EMBL" id="CP002686">
    <property type="protein sequence ID" value="AEE73822.1"/>
    <property type="molecule type" value="Genomic_DNA"/>
</dbReference>
<dbReference type="EMBL" id="CP002686">
    <property type="protein sequence ID" value="ANM65632.1"/>
    <property type="molecule type" value="Genomic_DNA"/>
</dbReference>
<dbReference type="EMBL" id="AY065274">
    <property type="protein sequence ID" value="AAL38750.1"/>
    <property type="molecule type" value="mRNA"/>
</dbReference>
<dbReference type="EMBL" id="AY096526">
    <property type="protein sequence ID" value="AAM20176.1"/>
    <property type="molecule type" value="mRNA"/>
</dbReference>
<dbReference type="EMBL" id="AY087723">
    <property type="protein sequence ID" value="AAM65260.1"/>
    <property type="molecule type" value="mRNA"/>
</dbReference>
<dbReference type="RefSeq" id="NP_001327587.1">
    <property type="nucleotide sequence ID" value="NM_001337415.1"/>
</dbReference>
<dbReference type="RefSeq" id="NP_566174.1">
    <property type="nucleotide sequence ID" value="NM_111119.3"/>
</dbReference>
<dbReference type="SMR" id="Q96300"/>
<dbReference type="BioGRID" id="6393">
    <property type="interactions" value="56"/>
</dbReference>
<dbReference type="FunCoup" id="Q96300">
    <property type="interactions" value="3640"/>
</dbReference>
<dbReference type="IntAct" id="Q96300">
    <property type="interactions" value="9"/>
</dbReference>
<dbReference type="STRING" id="3702.Q96300"/>
<dbReference type="iPTMnet" id="Q96300"/>
<dbReference type="PaxDb" id="3702-AT3G02520.1"/>
<dbReference type="ProteomicsDB" id="244517"/>
<dbReference type="EnsemblPlants" id="AT3G02520.1">
    <property type="protein sequence ID" value="AT3G02520.1"/>
    <property type="gene ID" value="AT3G02520"/>
</dbReference>
<dbReference type="EnsemblPlants" id="AT3G02520.2">
    <property type="protein sequence ID" value="AT3G02520.2"/>
    <property type="gene ID" value="AT3G02520"/>
</dbReference>
<dbReference type="GeneID" id="821060"/>
<dbReference type="Gramene" id="AT3G02520.1">
    <property type="protein sequence ID" value="AT3G02520.1"/>
    <property type="gene ID" value="AT3G02520"/>
</dbReference>
<dbReference type="Gramene" id="AT3G02520.2">
    <property type="protein sequence ID" value="AT3G02520.2"/>
    <property type="gene ID" value="AT3G02520"/>
</dbReference>
<dbReference type="KEGG" id="ath:AT3G02520"/>
<dbReference type="Araport" id="AT3G02520"/>
<dbReference type="TAIR" id="AT3G02520">
    <property type="gene designation" value="GRF7"/>
</dbReference>
<dbReference type="eggNOG" id="KOG0841">
    <property type="taxonomic scope" value="Eukaryota"/>
</dbReference>
<dbReference type="HOGENOM" id="CLU_058290_0_0_1"/>
<dbReference type="InParanoid" id="Q96300"/>
<dbReference type="OMA" id="SKGTDKH"/>
<dbReference type="OrthoDB" id="10260625at2759"/>
<dbReference type="PhylomeDB" id="Q96300"/>
<dbReference type="CD-CODE" id="4299E36E">
    <property type="entry name" value="Nucleolus"/>
</dbReference>
<dbReference type="PRO" id="PR:Q96300"/>
<dbReference type="Proteomes" id="UP000006548">
    <property type="component" value="Chromosome 3"/>
</dbReference>
<dbReference type="ExpressionAtlas" id="Q96300">
    <property type="expression patterns" value="baseline and differential"/>
</dbReference>
<dbReference type="GO" id="GO:0005829">
    <property type="term" value="C:cytosol"/>
    <property type="evidence" value="ECO:0007005"/>
    <property type="project" value="TAIR"/>
</dbReference>
<dbReference type="GO" id="GO:0005794">
    <property type="term" value="C:Golgi apparatus"/>
    <property type="evidence" value="ECO:0007005"/>
    <property type="project" value="TAIR"/>
</dbReference>
<dbReference type="GO" id="GO:0005634">
    <property type="term" value="C:nucleus"/>
    <property type="evidence" value="ECO:0007669"/>
    <property type="project" value="UniProtKB-SubCell"/>
</dbReference>
<dbReference type="GO" id="GO:0005886">
    <property type="term" value="C:plasma membrane"/>
    <property type="evidence" value="ECO:0007005"/>
    <property type="project" value="TAIR"/>
</dbReference>
<dbReference type="GO" id="GO:0009506">
    <property type="term" value="C:plasmodesma"/>
    <property type="evidence" value="ECO:0007005"/>
    <property type="project" value="TAIR"/>
</dbReference>
<dbReference type="FunFam" id="1.20.190.20:FF:000002">
    <property type="entry name" value="14-3-3 protein epsilon"/>
    <property type="match status" value="1"/>
</dbReference>
<dbReference type="Gene3D" id="1.20.190.20">
    <property type="entry name" value="14-3-3 domain"/>
    <property type="match status" value="1"/>
</dbReference>
<dbReference type="InterPro" id="IPR000308">
    <property type="entry name" value="14-3-3"/>
</dbReference>
<dbReference type="InterPro" id="IPR023409">
    <property type="entry name" value="14-3-3_CS"/>
</dbReference>
<dbReference type="InterPro" id="IPR036815">
    <property type="entry name" value="14-3-3_dom_sf"/>
</dbReference>
<dbReference type="InterPro" id="IPR023410">
    <property type="entry name" value="14-3-3_domain"/>
</dbReference>
<dbReference type="PANTHER" id="PTHR18860">
    <property type="entry name" value="14-3-3 PROTEIN"/>
    <property type="match status" value="1"/>
</dbReference>
<dbReference type="Pfam" id="PF00244">
    <property type="entry name" value="14-3-3"/>
    <property type="match status" value="1"/>
</dbReference>
<dbReference type="PIRSF" id="PIRSF000868">
    <property type="entry name" value="14-3-3"/>
    <property type="match status" value="1"/>
</dbReference>
<dbReference type="PRINTS" id="PR00305">
    <property type="entry name" value="1433ZETA"/>
</dbReference>
<dbReference type="SMART" id="SM00101">
    <property type="entry name" value="14_3_3"/>
    <property type="match status" value="1"/>
</dbReference>
<dbReference type="SUPFAM" id="SSF48445">
    <property type="entry name" value="14-3-3 protein"/>
    <property type="match status" value="1"/>
</dbReference>
<dbReference type="PROSITE" id="PS00796">
    <property type="entry name" value="1433_1"/>
    <property type="match status" value="1"/>
</dbReference>
<dbReference type="PROSITE" id="PS00797">
    <property type="entry name" value="1433_2"/>
    <property type="match status" value="1"/>
</dbReference>
<organism>
    <name type="scientific">Arabidopsis thaliana</name>
    <name type="common">Mouse-ear cress</name>
    <dbReference type="NCBI Taxonomy" id="3702"/>
    <lineage>
        <taxon>Eukaryota</taxon>
        <taxon>Viridiplantae</taxon>
        <taxon>Streptophyta</taxon>
        <taxon>Embryophyta</taxon>
        <taxon>Tracheophyta</taxon>
        <taxon>Spermatophyta</taxon>
        <taxon>Magnoliopsida</taxon>
        <taxon>eudicotyledons</taxon>
        <taxon>Gunneridae</taxon>
        <taxon>Pentapetalae</taxon>
        <taxon>rosids</taxon>
        <taxon>malvids</taxon>
        <taxon>Brassicales</taxon>
        <taxon>Brassicaceae</taxon>
        <taxon>Camelineae</taxon>
        <taxon>Arabidopsis</taxon>
    </lineage>
</organism>
<comment type="function">
    <text>Is associated with a DNA binding complex that binds to the G box, a well-characterized cis-acting DNA regulatory element found in plant genes.</text>
</comment>
<comment type="subunit">
    <text evidence="3 4 5">Component of the SERK1 signaling complex, composed of KAPP, CDC48A, GRF6 or GRF7, SERK1, SERK2, SERK3/BAK1 and BRI1 (PubMed:16473966). Interacts with DREB1A and DREB1B in the nucleus (PubMed:28344081). Interacts with CINV1 (PubMed:25256212).</text>
</comment>
<comment type="subcellular location">
    <subcellularLocation>
        <location evidence="1">Nucleus</location>
    </subcellularLocation>
    <subcellularLocation>
        <location evidence="1">Cytoplasm</location>
    </subcellularLocation>
    <text evidence="1">Translocates from the cytosol to the nucleus when phosphorylated.</text>
</comment>
<comment type="similarity">
    <text evidence="6">Belongs to the 14-3-3 family.</text>
</comment>
<evidence type="ECO:0000250" key="1">
    <source>
        <dbReference type="UniProtKB" id="P48349"/>
    </source>
</evidence>
<evidence type="ECO:0000256" key="2">
    <source>
        <dbReference type="SAM" id="MobiDB-lite"/>
    </source>
</evidence>
<evidence type="ECO:0000269" key="3">
    <source>
    </source>
</evidence>
<evidence type="ECO:0000269" key="4">
    <source>
    </source>
</evidence>
<evidence type="ECO:0000269" key="5">
    <source>
    </source>
</evidence>
<evidence type="ECO:0000305" key="6"/>
<gene>
    <name type="primary">GRF7</name>
    <name type="ordered locus">At3g02520</name>
    <name type="ORF">F16B3.15</name>
</gene>
<feature type="chain" id="PRO_0000058669" description="14-3-3-like protein GF14 nu">
    <location>
        <begin position="1"/>
        <end position="265"/>
    </location>
</feature>
<feature type="region of interest" description="Disordered" evidence="2">
    <location>
        <begin position="242"/>
        <end position="265"/>
    </location>
</feature>
<feature type="compositionally biased region" description="Basic and acidic residues" evidence="2">
    <location>
        <begin position="245"/>
        <end position="265"/>
    </location>
</feature>
<feature type="modified residue" description="Phosphoserine" evidence="1">
    <location>
        <position position="67"/>
    </location>
</feature>
<feature type="modified residue" description="Phosphoserine" evidence="1">
    <location>
        <position position="109"/>
    </location>
</feature>
<feature type="modified residue" description="Phosphoserine" evidence="1">
    <location>
        <position position="190"/>
    </location>
</feature>
<feature type="modified residue" description="Phosphothreonine" evidence="1">
    <location>
        <position position="211"/>
    </location>
</feature>